<feature type="chain" id="PRO_0000340171" description="Sugar fermentation stimulation protein homolog">
    <location>
        <begin position="1"/>
        <end position="232"/>
    </location>
</feature>
<reference key="1">
    <citation type="submission" date="2007-04" db="EMBL/GenBank/DDBJ databases">
        <title>Complete sequence of Pyrobaculum arsenaticum DSM 13514.</title>
        <authorList>
            <consortium name="US DOE Joint Genome Institute"/>
            <person name="Copeland A."/>
            <person name="Lucas S."/>
            <person name="Lapidus A."/>
            <person name="Barry K."/>
            <person name="Glavina del Rio T."/>
            <person name="Dalin E."/>
            <person name="Tice H."/>
            <person name="Pitluck S."/>
            <person name="Chain P."/>
            <person name="Malfatti S."/>
            <person name="Shin M."/>
            <person name="Vergez L."/>
            <person name="Schmutz J."/>
            <person name="Larimer F."/>
            <person name="Land M."/>
            <person name="Hauser L."/>
            <person name="Kyrpides N."/>
            <person name="Mikhailova N."/>
            <person name="Cozen A.E."/>
            <person name="Fitz-Gibbon S.T."/>
            <person name="House C.H."/>
            <person name="Saltikov C."/>
            <person name="Lowe T.M."/>
            <person name="Richardson P."/>
        </authorList>
    </citation>
    <scope>NUCLEOTIDE SEQUENCE [LARGE SCALE GENOMIC DNA]</scope>
    <source>
        <strain>ATCC 700994 / DSM 13514 / JCM 11321 / PZ6</strain>
    </source>
</reference>
<dbReference type="EMBL" id="CP000660">
    <property type="protein sequence ID" value="ABP50585.1"/>
    <property type="molecule type" value="Genomic_DNA"/>
</dbReference>
<dbReference type="SMR" id="A4WJL8"/>
<dbReference type="KEGG" id="pas:Pars_1005"/>
<dbReference type="HOGENOM" id="CLU_052299_1_0_2"/>
<dbReference type="OrthoDB" id="34139at2157"/>
<dbReference type="PhylomeDB" id="A4WJL8"/>
<dbReference type="Proteomes" id="UP000001567">
    <property type="component" value="Chromosome"/>
</dbReference>
<dbReference type="GO" id="GO:0003677">
    <property type="term" value="F:DNA binding"/>
    <property type="evidence" value="ECO:0007669"/>
    <property type="project" value="InterPro"/>
</dbReference>
<dbReference type="Gene3D" id="2.40.50.580">
    <property type="match status" value="1"/>
</dbReference>
<dbReference type="Gene3D" id="3.40.1350.60">
    <property type="match status" value="1"/>
</dbReference>
<dbReference type="HAMAP" id="MF_00095">
    <property type="entry name" value="SfsA"/>
    <property type="match status" value="1"/>
</dbReference>
<dbReference type="InterPro" id="IPR005224">
    <property type="entry name" value="SfsA"/>
</dbReference>
<dbReference type="InterPro" id="IPR040452">
    <property type="entry name" value="SfsA_C"/>
</dbReference>
<dbReference type="InterPro" id="IPR041465">
    <property type="entry name" value="SfsA_N"/>
</dbReference>
<dbReference type="NCBIfam" id="TIGR00230">
    <property type="entry name" value="sfsA"/>
    <property type="match status" value="1"/>
</dbReference>
<dbReference type="PANTHER" id="PTHR30545">
    <property type="entry name" value="SUGAR FERMENTATION STIMULATION PROTEIN A"/>
    <property type="match status" value="1"/>
</dbReference>
<dbReference type="PANTHER" id="PTHR30545:SF2">
    <property type="entry name" value="SUGAR FERMENTATION STIMULATION PROTEIN A"/>
    <property type="match status" value="1"/>
</dbReference>
<dbReference type="Pfam" id="PF03749">
    <property type="entry name" value="SfsA"/>
    <property type="match status" value="1"/>
</dbReference>
<dbReference type="Pfam" id="PF17746">
    <property type="entry name" value="SfsA_N"/>
    <property type="match status" value="1"/>
</dbReference>
<accession>A4WJL8</accession>
<evidence type="ECO:0000255" key="1">
    <source>
        <dbReference type="HAMAP-Rule" id="MF_00095"/>
    </source>
</evidence>
<gene>
    <name evidence="1" type="primary">sfsA</name>
    <name type="ordered locus">Pars_1005</name>
</gene>
<proteinExistence type="inferred from homology"/>
<protein>
    <recommendedName>
        <fullName evidence="1">Sugar fermentation stimulation protein homolog</fullName>
    </recommendedName>
</protein>
<organism>
    <name type="scientific">Pyrobaculum arsenaticum (strain DSM 13514 / JCM 11321 / PZ6)</name>
    <dbReference type="NCBI Taxonomy" id="340102"/>
    <lineage>
        <taxon>Archaea</taxon>
        <taxon>Thermoproteota</taxon>
        <taxon>Thermoprotei</taxon>
        <taxon>Thermoproteales</taxon>
        <taxon>Thermoproteaceae</taxon>
        <taxon>Pyrobaculum</taxon>
    </lineage>
</organism>
<sequence length="232" mass="26090">MYFPLEEPDAYGDFVRRLNRFAGIAVIGGREVKIHIHDPGRLQELLFPGVKIWARRRVGGKTEYYLTAVELEEELVLVDSSLHNKVAAWLVESGVIFQGYRVAKKEPAFGKGRFDLLLESPTGGRALVEVKGVTLEAGRRALFPDAPTARGARHMEELARATAEGYEAYVLFLVFRKRAASFSPNWDMDRKFAESLLRAHNAGVGVRAVKLEMFKWGLRYVGELPVDLTPPF</sequence>
<comment type="similarity">
    <text evidence="1">Belongs to the SfsA family.</text>
</comment>
<name>SFSA_PYRAR</name>